<organism>
    <name type="scientific">Helicobacter pylori (strain P12)</name>
    <dbReference type="NCBI Taxonomy" id="570508"/>
    <lineage>
        <taxon>Bacteria</taxon>
        <taxon>Pseudomonadati</taxon>
        <taxon>Campylobacterota</taxon>
        <taxon>Epsilonproteobacteria</taxon>
        <taxon>Campylobacterales</taxon>
        <taxon>Helicobacteraceae</taxon>
        <taxon>Helicobacter</taxon>
    </lineage>
</organism>
<dbReference type="EC" id="2.5.1.6" evidence="1"/>
<dbReference type="EMBL" id="CP001217">
    <property type="protein sequence ID" value="ACJ07358.1"/>
    <property type="molecule type" value="Genomic_DNA"/>
</dbReference>
<dbReference type="SMR" id="B6JPU7"/>
<dbReference type="KEGG" id="hpp:HPP12_0198"/>
<dbReference type="HOGENOM" id="CLU_041802_1_1_7"/>
<dbReference type="UniPathway" id="UPA00315">
    <property type="reaction ID" value="UER00080"/>
</dbReference>
<dbReference type="Proteomes" id="UP000008198">
    <property type="component" value="Chromosome"/>
</dbReference>
<dbReference type="GO" id="GO:0005737">
    <property type="term" value="C:cytoplasm"/>
    <property type="evidence" value="ECO:0007669"/>
    <property type="project" value="UniProtKB-SubCell"/>
</dbReference>
<dbReference type="GO" id="GO:0005524">
    <property type="term" value="F:ATP binding"/>
    <property type="evidence" value="ECO:0007669"/>
    <property type="project" value="UniProtKB-UniRule"/>
</dbReference>
<dbReference type="GO" id="GO:0000287">
    <property type="term" value="F:magnesium ion binding"/>
    <property type="evidence" value="ECO:0007669"/>
    <property type="project" value="UniProtKB-UniRule"/>
</dbReference>
<dbReference type="GO" id="GO:0004478">
    <property type="term" value="F:methionine adenosyltransferase activity"/>
    <property type="evidence" value="ECO:0007669"/>
    <property type="project" value="UniProtKB-UniRule"/>
</dbReference>
<dbReference type="GO" id="GO:0006730">
    <property type="term" value="P:one-carbon metabolic process"/>
    <property type="evidence" value="ECO:0007669"/>
    <property type="project" value="UniProtKB-KW"/>
</dbReference>
<dbReference type="GO" id="GO:0006556">
    <property type="term" value="P:S-adenosylmethionine biosynthetic process"/>
    <property type="evidence" value="ECO:0007669"/>
    <property type="project" value="UniProtKB-UniRule"/>
</dbReference>
<dbReference type="CDD" id="cd18079">
    <property type="entry name" value="S-AdoMet_synt"/>
    <property type="match status" value="1"/>
</dbReference>
<dbReference type="FunFam" id="3.30.300.10:FF:000003">
    <property type="entry name" value="S-adenosylmethionine synthase"/>
    <property type="match status" value="1"/>
</dbReference>
<dbReference type="Gene3D" id="3.30.300.10">
    <property type="match status" value="3"/>
</dbReference>
<dbReference type="HAMAP" id="MF_00086">
    <property type="entry name" value="S_AdoMet_synth1"/>
    <property type="match status" value="1"/>
</dbReference>
<dbReference type="InterPro" id="IPR022631">
    <property type="entry name" value="ADOMET_SYNTHASE_CS"/>
</dbReference>
<dbReference type="InterPro" id="IPR022630">
    <property type="entry name" value="S-AdoMet_synt_C"/>
</dbReference>
<dbReference type="InterPro" id="IPR022629">
    <property type="entry name" value="S-AdoMet_synt_central"/>
</dbReference>
<dbReference type="InterPro" id="IPR022628">
    <property type="entry name" value="S-AdoMet_synt_N"/>
</dbReference>
<dbReference type="InterPro" id="IPR002133">
    <property type="entry name" value="S-AdoMet_synthetase"/>
</dbReference>
<dbReference type="InterPro" id="IPR022636">
    <property type="entry name" value="S-AdoMet_synthetase_sfam"/>
</dbReference>
<dbReference type="NCBIfam" id="TIGR01034">
    <property type="entry name" value="metK"/>
    <property type="match status" value="1"/>
</dbReference>
<dbReference type="PANTHER" id="PTHR11964">
    <property type="entry name" value="S-ADENOSYLMETHIONINE SYNTHETASE"/>
    <property type="match status" value="1"/>
</dbReference>
<dbReference type="Pfam" id="PF02773">
    <property type="entry name" value="S-AdoMet_synt_C"/>
    <property type="match status" value="1"/>
</dbReference>
<dbReference type="Pfam" id="PF02772">
    <property type="entry name" value="S-AdoMet_synt_M"/>
    <property type="match status" value="1"/>
</dbReference>
<dbReference type="Pfam" id="PF00438">
    <property type="entry name" value="S-AdoMet_synt_N"/>
    <property type="match status" value="1"/>
</dbReference>
<dbReference type="PIRSF" id="PIRSF000497">
    <property type="entry name" value="MAT"/>
    <property type="match status" value="1"/>
</dbReference>
<dbReference type="SUPFAM" id="SSF55973">
    <property type="entry name" value="S-adenosylmethionine synthetase"/>
    <property type="match status" value="3"/>
</dbReference>
<dbReference type="PROSITE" id="PS00376">
    <property type="entry name" value="ADOMET_SYNTHASE_1"/>
    <property type="match status" value="1"/>
</dbReference>
<dbReference type="PROSITE" id="PS00377">
    <property type="entry name" value="ADOMET_SYNTHASE_2"/>
    <property type="match status" value="1"/>
</dbReference>
<comment type="function">
    <text evidence="1">Catalyzes the formation of S-adenosylmethionine (AdoMet) from methionine and ATP. The overall synthetic reaction is composed of two sequential steps, AdoMet formation and the subsequent tripolyphosphate hydrolysis which occurs prior to release of AdoMet from the enzyme.</text>
</comment>
<comment type="catalytic activity">
    <reaction evidence="1">
        <text>L-methionine + ATP + H2O = S-adenosyl-L-methionine + phosphate + diphosphate</text>
        <dbReference type="Rhea" id="RHEA:21080"/>
        <dbReference type="ChEBI" id="CHEBI:15377"/>
        <dbReference type="ChEBI" id="CHEBI:30616"/>
        <dbReference type="ChEBI" id="CHEBI:33019"/>
        <dbReference type="ChEBI" id="CHEBI:43474"/>
        <dbReference type="ChEBI" id="CHEBI:57844"/>
        <dbReference type="ChEBI" id="CHEBI:59789"/>
        <dbReference type="EC" id="2.5.1.6"/>
    </reaction>
</comment>
<comment type="cofactor">
    <cofactor evidence="1">
        <name>Mg(2+)</name>
        <dbReference type="ChEBI" id="CHEBI:18420"/>
    </cofactor>
    <text evidence="1">Binds 2 divalent ions per subunit.</text>
</comment>
<comment type="cofactor">
    <cofactor evidence="1">
        <name>K(+)</name>
        <dbReference type="ChEBI" id="CHEBI:29103"/>
    </cofactor>
    <text evidence="1">Binds 1 potassium ion per subunit.</text>
</comment>
<comment type="pathway">
    <text evidence="1">Amino-acid biosynthesis; S-adenosyl-L-methionine biosynthesis; S-adenosyl-L-methionine from L-methionine: step 1/1.</text>
</comment>
<comment type="subunit">
    <text evidence="1">Homotetramer; dimer of dimers.</text>
</comment>
<comment type="subcellular location">
    <subcellularLocation>
        <location evidence="1">Cytoplasm</location>
    </subcellularLocation>
</comment>
<comment type="similarity">
    <text evidence="1">Belongs to the AdoMet synthase family.</text>
</comment>
<protein>
    <recommendedName>
        <fullName evidence="1">S-adenosylmethionine synthase</fullName>
        <shortName evidence="1">AdoMet synthase</shortName>
        <ecNumber evidence="1">2.5.1.6</ecNumber>
    </recommendedName>
    <alternativeName>
        <fullName evidence="1">MAT</fullName>
    </alternativeName>
    <alternativeName>
        <fullName evidence="1">Methionine adenosyltransferase</fullName>
    </alternativeName>
</protein>
<accession>B6JPU7</accession>
<gene>
    <name evidence="1" type="primary">metK</name>
    <name type="ordered locus">HPP12_0198</name>
</gene>
<keyword id="KW-0067">ATP-binding</keyword>
<keyword id="KW-0963">Cytoplasm</keyword>
<keyword id="KW-0460">Magnesium</keyword>
<keyword id="KW-0479">Metal-binding</keyword>
<keyword id="KW-0547">Nucleotide-binding</keyword>
<keyword id="KW-0554">One-carbon metabolism</keyword>
<keyword id="KW-0630">Potassium</keyword>
<keyword id="KW-0808">Transferase</keyword>
<reference key="1">
    <citation type="submission" date="2008-10" db="EMBL/GenBank/DDBJ databases">
        <title>The complete genome sequence of Helicobacter pylori strain P12.</title>
        <authorList>
            <person name="Fischer W."/>
            <person name="Windhager L."/>
            <person name="Karnholz A."/>
            <person name="Zeiller M."/>
            <person name="Zimmer R."/>
            <person name="Haas R."/>
        </authorList>
    </citation>
    <scope>NUCLEOTIDE SEQUENCE [LARGE SCALE GENOMIC DNA]</scope>
    <source>
        <strain>P12</strain>
    </source>
</reference>
<sequence length="385" mass="42416">MKDSFLFTSESVTEGHPDKMADQISDAVLDYIIERDQKAKVACETLVSNGFCMITGELKTSVYAPMQEIAREVVKKIGYTDALYGFDYRSAAVLNGVGEQSPDINQGVDREDGEIGAGDQGLMFGYACKETETLMPLPIHLAHQLTFALAQKRKDNTLPFLRPDGKSQVSVRYENNKPVSIDTIVISTQHSPEVSQKHLKEAVIEEIVYKILPKEYLHDNIKFFVNPTGKFVIGGPQGDAGLTGRKIIVDTYGGSCPHGGGAFSGKDPSKVDRSAAYAARYVAKNLVASGVCDKATVQLAYAIGVIEPVSIYVNTHNTSKYSSTELEKCVKSVFKLTPKGIIESLDLLRPIYSLTSAYGHFGRELEEFTWEKTNKAEEIKAFFKR</sequence>
<feature type="chain" id="PRO_1000093052" description="S-adenosylmethionine synthase">
    <location>
        <begin position="1"/>
        <end position="385"/>
    </location>
</feature>
<feature type="region of interest" description="Flexible loop" evidence="1">
    <location>
        <begin position="100"/>
        <end position="110"/>
    </location>
</feature>
<feature type="binding site" description="in other chain" evidence="1">
    <location>
        <position position="16"/>
    </location>
    <ligand>
        <name>ATP</name>
        <dbReference type="ChEBI" id="CHEBI:30616"/>
        <note>ligand shared between two neighboring subunits</note>
    </ligand>
</feature>
<feature type="binding site" evidence="1">
    <location>
        <position position="18"/>
    </location>
    <ligand>
        <name>Mg(2+)</name>
        <dbReference type="ChEBI" id="CHEBI:18420"/>
    </ligand>
</feature>
<feature type="binding site" evidence="1">
    <location>
        <position position="44"/>
    </location>
    <ligand>
        <name>K(+)</name>
        <dbReference type="ChEBI" id="CHEBI:29103"/>
    </ligand>
</feature>
<feature type="binding site" description="in other chain" evidence="1">
    <location>
        <position position="57"/>
    </location>
    <ligand>
        <name>L-methionine</name>
        <dbReference type="ChEBI" id="CHEBI:57844"/>
        <note>ligand shared between two neighboring subunits</note>
    </ligand>
</feature>
<feature type="binding site" description="in other chain" evidence="1">
    <location>
        <position position="100"/>
    </location>
    <ligand>
        <name>L-methionine</name>
        <dbReference type="ChEBI" id="CHEBI:57844"/>
        <note>ligand shared between two neighboring subunits</note>
    </ligand>
</feature>
<feature type="binding site" description="in other chain" evidence="1">
    <location>
        <begin position="164"/>
        <end position="166"/>
    </location>
    <ligand>
        <name>ATP</name>
        <dbReference type="ChEBI" id="CHEBI:30616"/>
        <note>ligand shared between two neighboring subunits</note>
    </ligand>
</feature>
<feature type="binding site" description="in other chain" evidence="1">
    <location>
        <begin position="230"/>
        <end position="231"/>
    </location>
    <ligand>
        <name>ATP</name>
        <dbReference type="ChEBI" id="CHEBI:30616"/>
        <note>ligand shared between two neighboring subunits</note>
    </ligand>
</feature>
<feature type="binding site" evidence="1">
    <location>
        <position position="239"/>
    </location>
    <ligand>
        <name>ATP</name>
        <dbReference type="ChEBI" id="CHEBI:30616"/>
        <note>ligand shared between two neighboring subunits</note>
    </ligand>
</feature>
<feature type="binding site" evidence="1">
    <location>
        <position position="239"/>
    </location>
    <ligand>
        <name>L-methionine</name>
        <dbReference type="ChEBI" id="CHEBI:57844"/>
        <note>ligand shared between two neighboring subunits</note>
    </ligand>
</feature>
<feature type="binding site" description="in other chain" evidence="1">
    <location>
        <begin position="245"/>
        <end position="246"/>
    </location>
    <ligand>
        <name>ATP</name>
        <dbReference type="ChEBI" id="CHEBI:30616"/>
        <note>ligand shared between two neighboring subunits</note>
    </ligand>
</feature>
<feature type="binding site" evidence="1">
    <location>
        <position position="262"/>
    </location>
    <ligand>
        <name>ATP</name>
        <dbReference type="ChEBI" id="CHEBI:30616"/>
        <note>ligand shared between two neighboring subunits</note>
    </ligand>
</feature>
<feature type="binding site" evidence="1">
    <location>
        <position position="266"/>
    </location>
    <ligand>
        <name>ATP</name>
        <dbReference type="ChEBI" id="CHEBI:30616"/>
        <note>ligand shared between two neighboring subunits</note>
    </ligand>
</feature>
<feature type="binding site" description="in other chain" evidence="1">
    <location>
        <position position="270"/>
    </location>
    <ligand>
        <name>L-methionine</name>
        <dbReference type="ChEBI" id="CHEBI:57844"/>
        <note>ligand shared between two neighboring subunits</note>
    </ligand>
</feature>
<evidence type="ECO:0000255" key="1">
    <source>
        <dbReference type="HAMAP-Rule" id="MF_00086"/>
    </source>
</evidence>
<name>METK_HELP2</name>
<proteinExistence type="inferred from homology"/>